<dbReference type="EMBL" id="CP001227">
    <property type="protein sequence ID" value="ACR47758.1"/>
    <property type="molecule type" value="Genomic_DNA"/>
</dbReference>
<dbReference type="RefSeq" id="WP_012151139.1">
    <property type="nucleotide sequence ID" value="NC_012730.1"/>
</dbReference>
<dbReference type="SMR" id="C4K2G1"/>
<dbReference type="GeneID" id="79937652"/>
<dbReference type="KEGG" id="rpk:RPR_06140"/>
<dbReference type="HOGENOM" id="CLU_131047_1_5_5"/>
<dbReference type="Proteomes" id="UP000005015">
    <property type="component" value="Chromosome"/>
</dbReference>
<dbReference type="GO" id="GO:0022625">
    <property type="term" value="C:cytosolic large ribosomal subunit"/>
    <property type="evidence" value="ECO:0007669"/>
    <property type="project" value="TreeGrafter"/>
</dbReference>
<dbReference type="GO" id="GO:0003735">
    <property type="term" value="F:structural constituent of ribosome"/>
    <property type="evidence" value="ECO:0007669"/>
    <property type="project" value="InterPro"/>
</dbReference>
<dbReference type="GO" id="GO:0006412">
    <property type="term" value="P:translation"/>
    <property type="evidence" value="ECO:0007669"/>
    <property type="project" value="UniProtKB-UniRule"/>
</dbReference>
<dbReference type="CDD" id="cd01658">
    <property type="entry name" value="Ribosomal_L30"/>
    <property type="match status" value="1"/>
</dbReference>
<dbReference type="Gene3D" id="3.30.1390.20">
    <property type="entry name" value="Ribosomal protein L30, ferredoxin-like fold domain"/>
    <property type="match status" value="1"/>
</dbReference>
<dbReference type="HAMAP" id="MF_01371_B">
    <property type="entry name" value="Ribosomal_uL30_B"/>
    <property type="match status" value="1"/>
</dbReference>
<dbReference type="InterPro" id="IPR036919">
    <property type="entry name" value="Ribo_uL30_ferredoxin-like_sf"/>
</dbReference>
<dbReference type="InterPro" id="IPR005996">
    <property type="entry name" value="Ribosomal_uL30_bac-type"/>
</dbReference>
<dbReference type="InterPro" id="IPR016082">
    <property type="entry name" value="Ribosomal_uL30_ferredoxin-like"/>
</dbReference>
<dbReference type="NCBIfam" id="TIGR01308">
    <property type="entry name" value="rpmD_bact"/>
    <property type="match status" value="1"/>
</dbReference>
<dbReference type="PANTHER" id="PTHR15892:SF2">
    <property type="entry name" value="LARGE RIBOSOMAL SUBUNIT PROTEIN UL30M"/>
    <property type="match status" value="1"/>
</dbReference>
<dbReference type="PANTHER" id="PTHR15892">
    <property type="entry name" value="MITOCHONDRIAL RIBOSOMAL PROTEIN L30"/>
    <property type="match status" value="1"/>
</dbReference>
<dbReference type="Pfam" id="PF00327">
    <property type="entry name" value="Ribosomal_L30"/>
    <property type="match status" value="1"/>
</dbReference>
<dbReference type="PIRSF" id="PIRSF002211">
    <property type="entry name" value="Ribosomal_L30_bac-type"/>
    <property type="match status" value="1"/>
</dbReference>
<dbReference type="SUPFAM" id="SSF55129">
    <property type="entry name" value="Ribosomal protein L30p/L7e"/>
    <property type="match status" value="1"/>
</dbReference>
<comment type="subunit">
    <text evidence="1">Part of the 50S ribosomal subunit.</text>
</comment>
<comment type="similarity">
    <text evidence="1">Belongs to the universal ribosomal protein uL30 family.</text>
</comment>
<reference key="1">
    <citation type="journal article" date="2009" name="PLoS ONE">
        <title>Genome sequence of the endosymbiont Rickettsia peacockii and comparison with virulent Rickettsia rickettsii: identification of virulence factors.</title>
        <authorList>
            <person name="Felsheim R.F."/>
            <person name="Kurtti T.J."/>
            <person name="Munderloh U.G."/>
        </authorList>
    </citation>
    <scope>NUCLEOTIDE SEQUENCE [LARGE SCALE GENOMIC DNA]</scope>
    <source>
        <strain>Rustic</strain>
    </source>
</reference>
<proteinExistence type="inferred from homology"/>
<evidence type="ECO:0000255" key="1">
    <source>
        <dbReference type="HAMAP-Rule" id="MF_01371"/>
    </source>
</evidence>
<evidence type="ECO:0000305" key="2"/>
<sequence>MNNKINNIKITQVHSAIGRKYDQRLILVGLGLNKINKSVILANTNSIKGMVKKVKHLLKIENM</sequence>
<organism>
    <name type="scientific">Rickettsia peacockii (strain Rustic)</name>
    <dbReference type="NCBI Taxonomy" id="562019"/>
    <lineage>
        <taxon>Bacteria</taxon>
        <taxon>Pseudomonadati</taxon>
        <taxon>Pseudomonadota</taxon>
        <taxon>Alphaproteobacteria</taxon>
        <taxon>Rickettsiales</taxon>
        <taxon>Rickettsiaceae</taxon>
        <taxon>Rickettsieae</taxon>
        <taxon>Rickettsia</taxon>
        <taxon>spotted fever group</taxon>
    </lineage>
</organism>
<keyword id="KW-0687">Ribonucleoprotein</keyword>
<keyword id="KW-0689">Ribosomal protein</keyword>
<accession>C4K2G1</accession>
<gene>
    <name evidence="1" type="primary">rpmD</name>
    <name type="ordered locus">RPR_06140</name>
</gene>
<feature type="chain" id="PRO_1000215073" description="Large ribosomal subunit protein uL30">
    <location>
        <begin position="1"/>
        <end position="63"/>
    </location>
</feature>
<name>RL30_RICPU</name>
<protein>
    <recommendedName>
        <fullName evidence="1">Large ribosomal subunit protein uL30</fullName>
    </recommendedName>
    <alternativeName>
        <fullName evidence="2">50S ribosomal protein L30</fullName>
    </alternativeName>
</protein>